<sequence length="193" mass="21952">MSDNYTPRLKAQYREEIREKLQAEFNFDNVMQIPGVTKVVVNMGVGDAARDSKMINGAIADLTAITGQKPQVRTAKKAIANFKLREGMPIGARVTLRGDRMWEFLDRLLTIALPRIRDFRGLSDRQFDGHGNYTFGLSEQTMFYEIDVDKMDRPRGMNITVVTTATNDEEGRALLRRLGFPFKDKDGKMQQAD</sequence>
<dbReference type="EMBL" id="AM942444">
    <property type="protein sequence ID" value="CAQ04305.1"/>
    <property type="molecule type" value="Genomic_DNA"/>
</dbReference>
<dbReference type="RefSeq" id="WP_012359598.1">
    <property type="nucleotide sequence ID" value="NC_010545.1"/>
</dbReference>
<dbReference type="SMR" id="B1VEW6"/>
<dbReference type="STRING" id="504474.cu0345"/>
<dbReference type="GeneID" id="60605148"/>
<dbReference type="KEGG" id="cur:cu0345"/>
<dbReference type="eggNOG" id="COG0094">
    <property type="taxonomic scope" value="Bacteria"/>
</dbReference>
<dbReference type="HOGENOM" id="CLU_061015_2_1_11"/>
<dbReference type="Proteomes" id="UP000001727">
    <property type="component" value="Chromosome"/>
</dbReference>
<dbReference type="GO" id="GO:1990904">
    <property type="term" value="C:ribonucleoprotein complex"/>
    <property type="evidence" value="ECO:0007669"/>
    <property type="project" value="UniProtKB-KW"/>
</dbReference>
<dbReference type="GO" id="GO:0005840">
    <property type="term" value="C:ribosome"/>
    <property type="evidence" value="ECO:0007669"/>
    <property type="project" value="UniProtKB-KW"/>
</dbReference>
<dbReference type="GO" id="GO:0019843">
    <property type="term" value="F:rRNA binding"/>
    <property type="evidence" value="ECO:0007669"/>
    <property type="project" value="UniProtKB-UniRule"/>
</dbReference>
<dbReference type="GO" id="GO:0003735">
    <property type="term" value="F:structural constituent of ribosome"/>
    <property type="evidence" value="ECO:0007669"/>
    <property type="project" value="InterPro"/>
</dbReference>
<dbReference type="GO" id="GO:0000049">
    <property type="term" value="F:tRNA binding"/>
    <property type="evidence" value="ECO:0007669"/>
    <property type="project" value="UniProtKB-UniRule"/>
</dbReference>
<dbReference type="GO" id="GO:0006412">
    <property type="term" value="P:translation"/>
    <property type="evidence" value="ECO:0007669"/>
    <property type="project" value="UniProtKB-UniRule"/>
</dbReference>
<dbReference type="FunFam" id="3.30.1440.10:FF:000001">
    <property type="entry name" value="50S ribosomal protein L5"/>
    <property type="match status" value="1"/>
</dbReference>
<dbReference type="Gene3D" id="3.30.1440.10">
    <property type="match status" value="1"/>
</dbReference>
<dbReference type="HAMAP" id="MF_01333_B">
    <property type="entry name" value="Ribosomal_uL5_B"/>
    <property type="match status" value="1"/>
</dbReference>
<dbReference type="InterPro" id="IPR002132">
    <property type="entry name" value="Ribosomal_uL5"/>
</dbReference>
<dbReference type="InterPro" id="IPR020930">
    <property type="entry name" value="Ribosomal_uL5_bac-type"/>
</dbReference>
<dbReference type="InterPro" id="IPR031309">
    <property type="entry name" value="Ribosomal_uL5_C"/>
</dbReference>
<dbReference type="InterPro" id="IPR022803">
    <property type="entry name" value="Ribosomal_uL5_dom_sf"/>
</dbReference>
<dbReference type="InterPro" id="IPR031310">
    <property type="entry name" value="Ribosomal_uL5_N"/>
</dbReference>
<dbReference type="NCBIfam" id="NF000585">
    <property type="entry name" value="PRK00010.1"/>
    <property type="match status" value="1"/>
</dbReference>
<dbReference type="PANTHER" id="PTHR11994">
    <property type="entry name" value="60S RIBOSOMAL PROTEIN L11-RELATED"/>
    <property type="match status" value="1"/>
</dbReference>
<dbReference type="Pfam" id="PF00281">
    <property type="entry name" value="Ribosomal_L5"/>
    <property type="match status" value="1"/>
</dbReference>
<dbReference type="Pfam" id="PF00673">
    <property type="entry name" value="Ribosomal_L5_C"/>
    <property type="match status" value="1"/>
</dbReference>
<dbReference type="PIRSF" id="PIRSF002161">
    <property type="entry name" value="Ribosomal_L5"/>
    <property type="match status" value="1"/>
</dbReference>
<dbReference type="SUPFAM" id="SSF55282">
    <property type="entry name" value="RL5-like"/>
    <property type="match status" value="1"/>
</dbReference>
<comment type="function">
    <text evidence="1">This is one of the proteins that bind and probably mediate the attachment of the 5S RNA into the large ribosomal subunit, where it forms part of the central protuberance. In the 70S ribosome it contacts protein S13 of the 30S subunit (bridge B1b), connecting the 2 subunits; this bridge is implicated in subunit movement. Contacts the P site tRNA; the 5S rRNA and some of its associated proteins might help stabilize positioning of ribosome-bound tRNAs.</text>
</comment>
<comment type="subunit">
    <text evidence="1">Part of the 50S ribosomal subunit; part of the 5S rRNA/L5/L18/L25 subcomplex. Contacts the 5S rRNA and the P site tRNA. Forms a bridge to the 30S subunit in the 70S ribosome.</text>
</comment>
<comment type="similarity">
    <text evidence="1">Belongs to the universal ribosomal protein uL5 family.</text>
</comment>
<gene>
    <name evidence="1" type="primary">rplE</name>
    <name type="ordered locus">cu0345</name>
</gene>
<proteinExistence type="inferred from homology"/>
<protein>
    <recommendedName>
        <fullName evidence="1">Large ribosomal subunit protein uL5</fullName>
    </recommendedName>
    <alternativeName>
        <fullName evidence="2">50S ribosomal protein L5</fullName>
    </alternativeName>
</protein>
<keyword id="KW-1185">Reference proteome</keyword>
<keyword id="KW-0687">Ribonucleoprotein</keyword>
<keyword id="KW-0689">Ribosomal protein</keyword>
<keyword id="KW-0694">RNA-binding</keyword>
<keyword id="KW-0699">rRNA-binding</keyword>
<keyword id="KW-0820">tRNA-binding</keyword>
<accession>B1VEW6</accession>
<organism>
    <name type="scientific">Corynebacterium urealyticum (strain ATCC 43042 / DSM 7109)</name>
    <dbReference type="NCBI Taxonomy" id="504474"/>
    <lineage>
        <taxon>Bacteria</taxon>
        <taxon>Bacillati</taxon>
        <taxon>Actinomycetota</taxon>
        <taxon>Actinomycetes</taxon>
        <taxon>Mycobacteriales</taxon>
        <taxon>Corynebacteriaceae</taxon>
        <taxon>Corynebacterium</taxon>
    </lineage>
</organism>
<evidence type="ECO:0000255" key="1">
    <source>
        <dbReference type="HAMAP-Rule" id="MF_01333"/>
    </source>
</evidence>
<evidence type="ECO:0000305" key="2"/>
<feature type="chain" id="PRO_1000142380" description="Large ribosomal subunit protein uL5">
    <location>
        <begin position="1"/>
        <end position="193"/>
    </location>
</feature>
<reference key="1">
    <citation type="journal article" date="2008" name="J. Biotechnol.">
        <title>The lifestyle of Corynebacterium urealyticum derived from its complete genome sequence established by pyrosequencing.</title>
        <authorList>
            <person name="Tauch A."/>
            <person name="Trost E."/>
            <person name="Tilker A."/>
            <person name="Ludewig U."/>
            <person name="Schneiker S."/>
            <person name="Goesmann A."/>
            <person name="Arnold W."/>
            <person name="Bekel T."/>
            <person name="Brinkrolf K."/>
            <person name="Brune I."/>
            <person name="Goetker S."/>
            <person name="Kalinowski J."/>
            <person name="Kamp P.-B."/>
            <person name="Lobo F.P."/>
            <person name="Viehoever P."/>
            <person name="Weisshaar B."/>
            <person name="Soriano F."/>
            <person name="Droege M."/>
            <person name="Puehler A."/>
        </authorList>
    </citation>
    <scope>NUCLEOTIDE SEQUENCE [LARGE SCALE GENOMIC DNA]</scope>
    <source>
        <strain>ATCC 43042 / DSM 7109</strain>
    </source>
</reference>
<name>RL5_CORU7</name>